<reference key="1">
    <citation type="journal article" date="2008" name="Infect. Immun.">
        <title>Genomic comparison of virulent Rickettsia rickettsii Sheila Smith and avirulent Rickettsia rickettsii Iowa.</title>
        <authorList>
            <person name="Ellison D.W."/>
            <person name="Clark T.R."/>
            <person name="Sturdevant D.E."/>
            <person name="Virtaneva K."/>
            <person name="Porcella S.F."/>
            <person name="Hackstadt T."/>
        </authorList>
    </citation>
    <scope>NUCLEOTIDE SEQUENCE [LARGE SCALE GENOMIC DNA]</scope>
    <source>
        <strain>Iowa</strain>
    </source>
</reference>
<keyword id="KW-0963">Cytoplasm</keyword>
<keyword id="KW-0396">Initiation factor</keyword>
<keyword id="KW-0648">Protein biosynthesis</keyword>
<keyword id="KW-0694">RNA-binding</keyword>
<keyword id="KW-0699">rRNA-binding</keyword>
<comment type="function">
    <text evidence="1">One of the essential components for the initiation of protein synthesis. Stabilizes the binding of IF-2 and IF-3 on the 30S subunit to which N-formylmethionyl-tRNA(fMet) subsequently binds. Helps modulate mRNA selection, yielding the 30S pre-initiation complex (PIC). Upon addition of the 50S ribosomal subunit IF-1, IF-2 and IF-3 are released leaving the mature 70S translation initiation complex.</text>
</comment>
<comment type="subunit">
    <text evidence="1">Component of the 30S ribosomal translation pre-initiation complex which assembles on the 30S ribosome in the order IF-2 and IF-3, IF-1 and N-formylmethionyl-tRNA(fMet); mRNA recruitment can occur at any time during PIC assembly.</text>
</comment>
<comment type="subcellular location">
    <subcellularLocation>
        <location evidence="1">Cytoplasm</location>
    </subcellularLocation>
</comment>
<comment type="similarity">
    <text evidence="1">Belongs to the IF-1 family.</text>
</comment>
<sequence length="71" mass="8241">MSKDDLIQFTGTVLELLPNATFRVKLENDHVIIAHTSGRMRKNRIRILLGDKVMVEMTPYDLTKGRVIHRH</sequence>
<protein>
    <recommendedName>
        <fullName evidence="1">Translation initiation factor IF-1</fullName>
    </recommendedName>
</protein>
<organism>
    <name type="scientific">Rickettsia rickettsii (strain Iowa)</name>
    <dbReference type="NCBI Taxonomy" id="452659"/>
    <lineage>
        <taxon>Bacteria</taxon>
        <taxon>Pseudomonadati</taxon>
        <taxon>Pseudomonadota</taxon>
        <taxon>Alphaproteobacteria</taxon>
        <taxon>Rickettsiales</taxon>
        <taxon>Rickettsiaceae</taxon>
        <taxon>Rickettsieae</taxon>
        <taxon>Rickettsia</taxon>
        <taxon>spotted fever group</taxon>
    </lineage>
</organism>
<evidence type="ECO:0000255" key="1">
    <source>
        <dbReference type="HAMAP-Rule" id="MF_00075"/>
    </source>
</evidence>
<name>IF1_RICRO</name>
<proteinExistence type="inferred from homology"/>
<dbReference type="EMBL" id="CP000766">
    <property type="protein sequence ID" value="ABY73203.1"/>
    <property type="molecule type" value="Genomic_DNA"/>
</dbReference>
<dbReference type="RefSeq" id="WP_010977828.1">
    <property type="nucleotide sequence ID" value="NC_010263.3"/>
</dbReference>
<dbReference type="SMR" id="B0BVE3"/>
<dbReference type="GeneID" id="928419"/>
<dbReference type="KEGG" id="rrj:RrIowa_1483"/>
<dbReference type="eggNOG" id="COG0361">
    <property type="taxonomic scope" value="Bacteria"/>
</dbReference>
<dbReference type="HOGENOM" id="CLU_151267_1_0_5"/>
<dbReference type="Proteomes" id="UP000000796">
    <property type="component" value="Chromosome"/>
</dbReference>
<dbReference type="GO" id="GO:0005829">
    <property type="term" value="C:cytosol"/>
    <property type="evidence" value="ECO:0007669"/>
    <property type="project" value="TreeGrafter"/>
</dbReference>
<dbReference type="GO" id="GO:0043022">
    <property type="term" value="F:ribosome binding"/>
    <property type="evidence" value="ECO:0007669"/>
    <property type="project" value="UniProtKB-UniRule"/>
</dbReference>
<dbReference type="GO" id="GO:0019843">
    <property type="term" value="F:rRNA binding"/>
    <property type="evidence" value="ECO:0007669"/>
    <property type="project" value="UniProtKB-UniRule"/>
</dbReference>
<dbReference type="GO" id="GO:0003743">
    <property type="term" value="F:translation initiation factor activity"/>
    <property type="evidence" value="ECO:0007669"/>
    <property type="project" value="UniProtKB-UniRule"/>
</dbReference>
<dbReference type="CDD" id="cd04451">
    <property type="entry name" value="S1_IF1"/>
    <property type="match status" value="1"/>
</dbReference>
<dbReference type="FunFam" id="2.40.50.140:FF:000002">
    <property type="entry name" value="Translation initiation factor IF-1"/>
    <property type="match status" value="1"/>
</dbReference>
<dbReference type="Gene3D" id="2.40.50.140">
    <property type="entry name" value="Nucleic acid-binding proteins"/>
    <property type="match status" value="1"/>
</dbReference>
<dbReference type="HAMAP" id="MF_00075">
    <property type="entry name" value="IF_1"/>
    <property type="match status" value="1"/>
</dbReference>
<dbReference type="InterPro" id="IPR012340">
    <property type="entry name" value="NA-bd_OB-fold"/>
</dbReference>
<dbReference type="InterPro" id="IPR006196">
    <property type="entry name" value="RNA-binding_domain_S1_IF1"/>
</dbReference>
<dbReference type="InterPro" id="IPR004368">
    <property type="entry name" value="TIF_IF1"/>
</dbReference>
<dbReference type="NCBIfam" id="TIGR00008">
    <property type="entry name" value="infA"/>
    <property type="match status" value="1"/>
</dbReference>
<dbReference type="PANTHER" id="PTHR33370">
    <property type="entry name" value="TRANSLATION INITIATION FACTOR IF-1, CHLOROPLASTIC"/>
    <property type="match status" value="1"/>
</dbReference>
<dbReference type="PANTHER" id="PTHR33370:SF1">
    <property type="entry name" value="TRANSLATION INITIATION FACTOR IF-1, CHLOROPLASTIC"/>
    <property type="match status" value="1"/>
</dbReference>
<dbReference type="Pfam" id="PF01176">
    <property type="entry name" value="eIF-1a"/>
    <property type="match status" value="1"/>
</dbReference>
<dbReference type="SUPFAM" id="SSF50249">
    <property type="entry name" value="Nucleic acid-binding proteins"/>
    <property type="match status" value="1"/>
</dbReference>
<dbReference type="PROSITE" id="PS50832">
    <property type="entry name" value="S1_IF1_TYPE"/>
    <property type="match status" value="1"/>
</dbReference>
<gene>
    <name evidence="1" type="primary">infA</name>
    <name type="ordered locus">RrIowa_1483</name>
</gene>
<feature type="chain" id="PRO_0000338906" description="Translation initiation factor IF-1">
    <location>
        <begin position="1"/>
        <end position="71"/>
    </location>
</feature>
<feature type="domain" description="S1-like" evidence="1">
    <location>
        <begin position="1"/>
        <end position="71"/>
    </location>
</feature>
<accession>B0BVE3</accession>